<evidence type="ECO:0000255" key="1">
    <source>
        <dbReference type="HAMAP-Rule" id="MF_01182"/>
    </source>
</evidence>
<evidence type="ECO:0000305" key="2"/>
<reference key="1">
    <citation type="submission" date="2006-08" db="EMBL/GenBank/DDBJ databases">
        <title>Complete sequence of Shewanella sp. MR-4.</title>
        <authorList>
            <consortium name="US DOE Joint Genome Institute"/>
            <person name="Copeland A."/>
            <person name="Lucas S."/>
            <person name="Lapidus A."/>
            <person name="Barry K."/>
            <person name="Detter J.C."/>
            <person name="Glavina del Rio T."/>
            <person name="Hammon N."/>
            <person name="Israni S."/>
            <person name="Dalin E."/>
            <person name="Tice H."/>
            <person name="Pitluck S."/>
            <person name="Kiss H."/>
            <person name="Brettin T."/>
            <person name="Bruce D."/>
            <person name="Han C."/>
            <person name="Tapia R."/>
            <person name="Gilna P."/>
            <person name="Schmutz J."/>
            <person name="Larimer F."/>
            <person name="Land M."/>
            <person name="Hauser L."/>
            <person name="Kyrpides N."/>
            <person name="Mikhailova N."/>
            <person name="Nealson K."/>
            <person name="Konstantinidis K."/>
            <person name="Klappenbach J."/>
            <person name="Tiedje J."/>
            <person name="Richardson P."/>
        </authorList>
    </citation>
    <scope>NUCLEOTIDE SEQUENCE [LARGE SCALE GENOMIC DNA]</scope>
    <source>
        <strain>MR-4</strain>
    </source>
</reference>
<keyword id="KW-0106">Calcium</keyword>
<keyword id="KW-0249">Electron transport</keyword>
<keyword id="KW-0349">Heme</keyword>
<keyword id="KW-0408">Iron</keyword>
<keyword id="KW-0479">Metal-binding</keyword>
<keyword id="KW-0560">Oxidoreductase</keyword>
<keyword id="KW-0574">Periplasm</keyword>
<keyword id="KW-0732">Signal</keyword>
<keyword id="KW-0813">Transport</keyword>
<sequence length="467" mass="51955">MMKKMTGKSFALSALVAASFMAAGAMASDKTEPRNEVYKDKFANQYNSWHDTAKSEEITDALAGDPSLVILWAGYGFAKDYNAPRGHMYAVTDVRNTLRTGAPTNAEDGPMPMACWSCKSPDVPRLIEEQGEDGYFKGKWAKGGPEVVNTIGCSDCHEKGTPKLRISRPFAERGMEALGTPFDKASKKDKQSMVCGQCHVEYYFEKKDDRKGFVKFPWDSGTTVEQMEAYYDAIEFSDWTHSLSKTPMLKAQHPGYETWKMGVHGKNDVSCVDCHMPKVTNDKGRKYTDHKVGNPFDRFDETCATCHSQSKEFLEGITKERYAKVKELKARAEGQLVKAHFEAAKAWEVGATEAEMKPILTDIRHAQWRWDFAIASHGVAAHAPEEALRILGTAVDKAADARVKLAQLLAKKGVTDAVAIPDISTKAKAQAALGMDMDKMNAEKEAFKKDMLPKWDAEAKKREATYK</sequence>
<organism>
    <name type="scientific">Shewanella sp. (strain MR-4)</name>
    <dbReference type="NCBI Taxonomy" id="60480"/>
    <lineage>
        <taxon>Bacteria</taxon>
        <taxon>Pseudomonadati</taxon>
        <taxon>Pseudomonadota</taxon>
        <taxon>Gammaproteobacteria</taxon>
        <taxon>Alteromonadales</taxon>
        <taxon>Shewanellaceae</taxon>
        <taxon>Shewanella</taxon>
    </lineage>
</organism>
<dbReference type="EC" id="1.7.2.2" evidence="1"/>
<dbReference type="EMBL" id="CP000446">
    <property type="protein sequence ID" value="ABI37739.1"/>
    <property type="status" value="ALT_INIT"/>
    <property type="molecule type" value="Genomic_DNA"/>
</dbReference>
<dbReference type="RefSeq" id="WP_041408688.1">
    <property type="nucleotide sequence ID" value="NC_008321.1"/>
</dbReference>
<dbReference type="SMR" id="Q0HMH8"/>
<dbReference type="KEGG" id="she:Shewmr4_0659"/>
<dbReference type="HOGENOM" id="CLU_035040_1_0_6"/>
<dbReference type="UniPathway" id="UPA00653"/>
<dbReference type="GO" id="GO:0030288">
    <property type="term" value="C:outer membrane-bounded periplasmic space"/>
    <property type="evidence" value="ECO:0007669"/>
    <property type="project" value="TreeGrafter"/>
</dbReference>
<dbReference type="GO" id="GO:0005509">
    <property type="term" value="F:calcium ion binding"/>
    <property type="evidence" value="ECO:0007669"/>
    <property type="project" value="UniProtKB-UniRule"/>
</dbReference>
<dbReference type="GO" id="GO:0020037">
    <property type="term" value="F:heme binding"/>
    <property type="evidence" value="ECO:0007669"/>
    <property type="project" value="InterPro"/>
</dbReference>
<dbReference type="GO" id="GO:0005506">
    <property type="term" value="F:iron ion binding"/>
    <property type="evidence" value="ECO:0007669"/>
    <property type="project" value="UniProtKB-UniRule"/>
</dbReference>
<dbReference type="GO" id="GO:0042279">
    <property type="term" value="F:nitrite reductase (cytochrome, ammonia-forming) activity"/>
    <property type="evidence" value="ECO:0007669"/>
    <property type="project" value="UniProtKB-UniRule"/>
</dbReference>
<dbReference type="GO" id="GO:0019645">
    <property type="term" value="P:anaerobic electron transport chain"/>
    <property type="evidence" value="ECO:0007669"/>
    <property type="project" value="TreeGrafter"/>
</dbReference>
<dbReference type="GO" id="GO:0042128">
    <property type="term" value="P:nitrate assimilation"/>
    <property type="evidence" value="ECO:0007669"/>
    <property type="project" value="UniProtKB-UniRule"/>
</dbReference>
<dbReference type="CDD" id="cd00548">
    <property type="entry name" value="NrfA-like"/>
    <property type="match status" value="1"/>
</dbReference>
<dbReference type="FunFam" id="1.10.1130.10:FF:000002">
    <property type="entry name" value="Cytochrome c-552"/>
    <property type="match status" value="1"/>
</dbReference>
<dbReference type="FunFam" id="1.20.140.10:FF:000014">
    <property type="entry name" value="Cytochrome c-552"/>
    <property type="match status" value="1"/>
</dbReference>
<dbReference type="Gene3D" id="1.20.140.10">
    <property type="entry name" value="Butyryl-CoA Dehydrogenase, subunit A, domain 3"/>
    <property type="match status" value="1"/>
</dbReference>
<dbReference type="Gene3D" id="1.10.1130.10">
    <property type="entry name" value="Flavocytochrome C3, Chain A"/>
    <property type="match status" value="1"/>
</dbReference>
<dbReference type="HAMAP" id="MF_01182">
    <property type="entry name" value="Cytochrom_C552"/>
    <property type="match status" value="1"/>
</dbReference>
<dbReference type="InterPro" id="IPR003321">
    <property type="entry name" value="Cyt_c552"/>
</dbReference>
<dbReference type="InterPro" id="IPR017570">
    <property type="entry name" value="Cyt_c_NO2Rdtase_formate-dep"/>
</dbReference>
<dbReference type="InterPro" id="IPR036280">
    <property type="entry name" value="Multihaem_cyt_sf"/>
</dbReference>
<dbReference type="NCBIfam" id="TIGR03152">
    <property type="entry name" value="cyto_c552_HCOOH"/>
    <property type="match status" value="1"/>
</dbReference>
<dbReference type="NCBIfam" id="NF008339">
    <property type="entry name" value="PRK11125.1"/>
    <property type="match status" value="1"/>
</dbReference>
<dbReference type="PANTHER" id="PTHR30633:SF0">
    <property type="entry name" value="CYTOCHROME C-552"/>
    <property type="match status" value="1"/>
</dbReference>
<dbReference type="PANTHER" id="PTHR30633">
    <property type="entry name" value="CYTOCHROME C-552 RESPIRATORY NITRITE REDUCTASE"/>
    <property type="match status" value="1"/>
</dbReference>
<dbReference type="Pfam" id="PF02335">
    <property type="entry name" value="Cytochrom_C552"/>
    <property type="match status" value="1"/>
</dbReference>
<dbReference type="PIRSF" id="PIRSF000243">
    <property type="entry name" value="Cyt_c552"/>
    <property type="match status" value="1"/>
</dbReference>
<dbReference type="SUPFAM" id="SSF48695">
    <property type="entry name" value="Multiheme cytochromes"/>
    <property type="match status" value="1"/>
</dbReference>
<dbReference type="PROSITE" id="PS51008">
    <property type="entry name" value="MULTIHEME_CYTC"/>
    <property type="match status" value="1"/>
</dbReference>
<comment type="function">
    <text evidence="1">Catalyzes the reduction of nitrite to ammonia, consuming six electrons in the process.</text>
</comment>
<comment type="catalytic activity">
    <reaction evidence="1">
        <text>6 Fe(III)-[cytochrome c] + NH4(+) + 2 H2O = 6 Fe(II)-[cytochrome c] + nitrite + 8 H(+)</text>
        <dbReference type="Rhea" id="RHEA:13089"/>
        <dbReference type="Rhea" id="RHEA-COMP:10350"/>
        <dbReference type="Rhea" id="RHEA-COMP:14399"/>
        <dbReference type="ChEBI" id="CHEBI:15377"/>
        <dbReference type="ChEBI" id="CHEBI:15378"/>
        <dbReference type="ChEBI" id="CHEBI:16301"/>
        <dbReference type="ChEBI" id="CHEBI:28938"/>
        <dbReference type="ChEBI" id="CHEBI:29033"/>
        <dbReference type="ChEBI" id="CHEBI:29034"/>
        <dbReference type="EC" id="1.7.2.2"/>
    </reaction>
</comment>
<comment type="cofactor">
    <cofactor evidence="1">
        <name>Ca(2+)</name>
        <dbReference type="ChEBI" id="CHEBI:29108"/>
    </cofactor>
    <text evidence="1">Binds 1 Ca(2+) ion per monomer.</text>
</comment>
<comment type="cofactor">
    <cofactor evidence="1">
        <name>heme c</name>
        <dbReference type="ChEBI" id="CHEBI:61717"/>
    </cofactor>
    <text evidence="1">Binds 5 heme c groups covalently per monomer.</text>
</comment>
<comment type="pathway">
    <text evidence="1">Nitrogen metabolism; nitrate reduction (assimilation).</text>
</comment>
<comment type="subcellular location">
    <subcellularLocation>
        <location evidence="1">Periplasm</location>
    </subcellularLocation>
</comment>
<comment type="similarity">
    <text evidence="1">Belongs to the cytochrome c-552 family.</text>
</comment>
<comment type="sequence caution" evidence="2">
    <conflict type="erroneous initiation">
        <sequence resource="EMBL-CDS" id="ABI37739"/>
    </conflict>
</comment>
<proteinExistence type="inferred from homology"/>
<name>NRFA_SHESM</name>
<protein>
    <recommendedName>
        <fullName evidence="1">Cytochrome c-552</fullName>
        <ecNumber evidence="1">1.7.2.2</ecNumber>
    </recommendedName>
    <alternativeName>
        <fullName evidence="1">Ammonia-forming cytochrome c nitrite reductase</fullName>
        <shortName evidence="1">Cytochrome c nitrite reductase</shortName>
    </alternativeName>
</protein>
<accession>Q0HMH8</accession>
<feature type="signal peptide" evidence="1">
    <location>
        <begin position="1"/>
        <end position="27"/>
    </location>
</feature>
<feature type="chain" id="PRO_0000268976" description="Cytochrome c-552">
    <location>
        <begin position="28"/>
        <end position="467"/>
    </location>
</feature>
<feature type="binding site" description="axial binding residue" evidence="1">
    <location>
        <position position="87"/>
    </location>
    <ligand>
        <name>heme c</name>
        <dbReference type="ChEBI" id="CHEBI:61717"/>
        <label>3</label>
    </ligand>
    <ligandPart>
        <name>Fe</name>
        <dbReference type="ChEBI" id="CHEBI:18248"/>
    </ligandPart>
</feature>
<feature type="binding site" description="covalent" evidence="1">
    <location>
        <position position="115"/>
    </location>
    <ligand>
        <name>heme</name>
        <dbReference type="ChEBI" id="CHEBI:30413"/>
        <label>1</label>
    </ligand>
</feature>
<feature type="binding site" description="covalent" evidence="1">
    <location>
        <position position="118"/>
    </location>
    <ligand>
        <name>heme</name>
        <dbReference type="ChEBI" id="CHEBI:30413"/>
        <label>1</label>
    </ligand>
</feature>
<feature type="binding site" description="axial binding residue" evidence="1">
    <location>
        <position position="119"/>
    </location>
    <ligand>
        <name>heme</name>
        <dbReference type="ChEBI" id="CHEBI:30413"/>
        <label>1</label>
    </ligand>
    <ligandPart>
        <name>Fe</name>
        <dbReference type="ChEBI" id="CHEBI:18248"/>
    </ligandPart>
</feature>
<feature type="binding site" description="covalent" evidence="1">
    <location>
        <position position="153"/>
    </location>
    <ligand>
        <name>heme c</name>
        <dbReference type="ChEBI" id="CHEBI:61717"/>
        <label>2</label>
    </ligand>
</feature>
<feature type="binding site" description="covalent" evidence="1">
    <location>
        <position position="156"/>
    </location>
    <ligand>
        <name>heme c</name>
        <dbReference type="ChEBI" id="CHEBI:61717"/>
        <label>2</label>
    </ligand>
</feature>
<feature type="binding site" description="axial binding residue" evidence="1">
    <location>
        <position position="157"/>
    </location>
    <ligand>
        <name>heme c</name>
        <dbReference type="ChEBI" id="CHEBI:61717"/>
        <label>2</label>
    </ligand>
    <ligandPart>
        <name>Fe</name>
        <dbReference type="ChEBI" id="CHEBI:18248"/>
    </ligandPart>
</feature>
<feature type="binding site" description="covalent" evidence="1">
    <location>
        <position position="195"/>
    </location>
    <ligand>
        <name>heme c</name>
        <dbReference type="ChEBI" id="CHEBI:61717"/>
        <label>3</label>
    </ligand>
</feature>
<feature type="binding site" description="covalent" evidence="1">
    <location>
        <position position="198"/>
    </location>
    <ligand>
        <name>heme c</name>
        <dbReference type="ChEBI" id="CHEBI:61717"/>
        <label>3</label>
    </ligand>
</feature>
<feature type="binding site" description="axial binding residue" evidence="1">
    <location>
        <position position="199"/>
    </location>
    <ligand>
        <name>heme c</name>
        <dbReference type="ChEBI" id="CHEBI:61717"/>
        <label>3</label>
    </ligand>
    <ligandPart>
        <name>Fe</name>
        <dbReference type="ChEBI" id="CHEBI:18248"/>
    </ligandPart>
</feature>
<feature type="binding site" evidence="1">
    <location>
        <position position="201"/>
    </location>
    <ligand>
        <name>Ca(2+)</name>
        <dbReference type="ChEBI" id="CHEBI:29108"/>
    </ligand>
</feature>
<feature type="binding site" evidence="1">
    <location>
        <position position="202"/>
    </location>
    <ligand>
        <name>Ca(2+)</name>
        <dbReference type="ChEBI" id="CHEBI:29108"/>
    </ligand>
</feature>
<feature type="binding site" evidence="1">
    <location>
        <position position="202"/>
    </location>
    <ligand>
        <name>substrate</name>
    </ligand>
</feature>
<feature type="binding site" evidence="1">
    <location>
        <position position="250"/>
    </location>
    <ligand>
        <name>Ca(2+)</name>
        <dbReference type="ChEBI" id="CHEBI:29108"/>
    </ligand>
</feature>
<feature type="binding site" evidence="1">
    <location>
        <position position="252"/>
    </location>
    <ligand>
        <name>Ca(2+)</name>
        <dbReference type="ChEBI" id="CHEBI:29108"/>
    </ligand>
</feature>
<feature type="binding site" evidence="1">
    <location>
        <position position="253"/>
    </location>
    <ligand>
        <name>substrate</name>
    </ligand>
</feature>
<feature type="binding site" description="axial binding residue" evidence="1">
    <location>
        <position position="264"/>
    </location>
    <ligand>
        <name>heme c</name>
        <dbReference type="ChEBI" id="CHEBI:61717"/>
        <label>5</label>
    </ligand>
    <ligandPart>
        <name>Fe</name>
        <dbReference type="ChEBI" id="CHEBI:18248"/>
    </ligandPart>
</feature>
<feature type="binding site" description="covalent" evidence="1">
    <location>
        <position position="271"/>
    </location>
    <ligand>
        <name>heme c</name>
        <dbReference type="ChEBI" id="CHEBI:61717"/>
        <label>4</label>
    </ligand>
</feature>
<feature type="binding site" description="covalent" evidence="1">
    <location>
        <position position="274"/>
    </location>
    <ligand>
        <name>heme c</name>
        <dbReference type="ChEBI" id="CHEBI:61717"/>
        <label>4</label>
    </ligand>
</feature>
<feature type="binding site" description="axial binding residue" evidence="1">
    <location>
        <position position="275"/>
    </location>
    <ligand>
        <name>heme c</name>
        <dbReference type="ChEBI" id="CHEBI:61717"/>
        <label>4</label>
    </ligand>
    <ligandPart>
        <name>Fe</name>
        <dbReference type="ChEBI" id="CHEBI:18248"/>
    </ligandPart>
</feature>
<feature type="binding site" description="axial binding residue" evidence="1">
    <location>
        <position position="290"/>
    </location>
    <ligand>
        <name>heme c</name>
        <dbReference type="ChEBI" id="CHEBI:61717"/>
        <label>2</label>
    </ligand>
    <ligandPart>
        <name>Fe</name>
        <dbReference type="ChEBI" id="CHEBI:18248"/>
    </ligandPart>
</feature>
<feature type="binding site" description="covalent" evidence="1">
    <location>
        <position position="303"/>
    </location>
    <ligand>
        <name>heme c</name>
        <dbReference type="ChEBI" id="CHEBI:61717"/>
        <label>5</label>
    </ligand>
</feature>
<feature type="binding site" description="covalent" evidence="1">
    <location>
        <position position="306"/>
    </location>
    <ligand>
        <name>heme c</name>
        <dbReference type="ChEBI" id="CHEBI:61717"/>
        <label>5</label>
    </ligand>
</feature>
<feature type="binding site" description="axial binding residue" evidence="1">
    <location>
        <position position="307"/>
    </location>
    <ligand>
        <name>heme c</name>
        <dbReference type="ChEBI" id="CHEBI:61717"/>
        <label>5</label>
    </ligand>
    <ligandPart>
        <name>Fe</name>
        <dbReference type="ChEBI" id="CHEBI:18248"/>
    </ligandPart>
</feature>
<feature type="binding site" description="axial binding residue" evidence="1">
    <location>
        <position position="382"/>
    </location>
    <ligand>
        <name>heme c</name>
        <dbReference type="ChEBI" id="CHEBI:61717"/>
        <label>4</label>
    </ligand>
    <ligandPart>
        <name>Fe</name>
        <dbReference type="ChEBI" id="CHEBI:18248"/>
    </ligandPart>
</feature>
<gene>
    <name evidence="1" type="primary">nrfA</name>
    <name type="ordered locus">Shewmr4_0659</name>
</gene>